<gene>
    <name evidence="1" type="primary">adk</name>
    <name type="ordered locus">HDEF_2095</name>
</gene>
<reference key="1">
    <citation type="journal article" date="2009" name="Proc. Natl. Acad. Sci. U.S.A.">
        <title>Hamiltonella defensa, genome evolution of protective bacterial endosymbiont from pathogenic ancestors.</title>
        <authorList>
            <person name="Degnan P.H."/>
            <person name="Yu Y."/>
            <person name="Sisneros N."/>
            <person name="Wing R.A."/>
            <person name="Moran N.A."/>
        </authorList>
    </citation>
    <scope>NUCLEOTIDE SEQUENCE [LARGE SCALE GENOMIC DNA]</scope>
    <source>
        <strain>5AT</strain>
    </source>
</reference>
<sequence>MRIILLGAPGAGKGTQAQFIMKKYGIVQISTGDMLRAAVKAGTKLGQQVQGIMAAGKLVTDDLVIALVKERIRQEDCKEGFLLDGFPRTIPQADAMAEADIKIDYVLELVVPDEFIVERISGRRVHMPSGRIYHLKFNPPKITDKDDMTGESLTLRKDDQETTVRERLLEYHQQTMALVDYYRQRAKRGDTKYFKLDGTRTVNEVSQQLSSILGES</sequence>
<keyword id="KW-0067">ATP-binding</keyword>
<keyword id="KW-0963">Cytoplasm</keyword>
<keyword id="KW-0418">Kinase</keyword>
<keyword id="KW-0545">Nucleotide biosynthesis</keyword>
<keyword id="KW-0547">Nucleotide-binding</keyword>
<keyword id="KW-0808">Transferase</keyword>
<protein>
    <recommendedName>
        <fullName evidence="1">Adenylate kinase</fullName>
        <shortName evidence="1">AK</shortName>
        <ecNumber evidence="1">2.7.4.3</ecNumber>
    </recommendedName>
    <alternativeName>
        <fullName evidence="1">ATP-AMP transphosphorylase</fullName>
    </alternativeName>
    <alternativeName>
        <fullName evidence="1">ATP:AMP phosphotransferase</fullName>
    </alternativeName>
    <alternativeName>
        <fullName evidence="1">Adenylate monophosphate kinase</fullName>
    </alternativeName>
</protein>
<proteinExistence type="inferred from homology"/>
<evidence type="ECO:0000255" key="1">
    <source>
        <dbReference type="HAMAP-Rule" id="MF_00235"/>
    </source>
</evidence>
<feature type="chain" id="PRO_1000204416" description="Adenylate kinase">
    <location>
        <begin position="1"/>
        <end position="216"/>
    </location>
</feature>
<feature type="region of interest" description="NMP" evidence="1">
    <location>
        <begin position="30"/>
        <end position="59"/>
    </location>
</feature>
<feature type="region of interest" description="LID">
    <location>
        <begin position="122"/>
        <end position="159"/>
    </location>
</feature>
<feature type="binding site" evidence="1">
    <location>
        <begin position="10"/>
        <end position="15"/>
    </location>
    <ligand>
        <name>ATP</name>
        <dbReference type="ChEBI" id="CHEBI:30616"/>
    </ligand>
</feature>
<feature type="binding site" evidence="1">
    <location>
        <position position="31"/>
    </location>
    <ligand>
        <name>AMP</name>
        <dbReference type="ChEBI" id="CHEBI:456215"/>
    </ligand>
</feature>
<feature type="binding site" evidence="1">
    <location>
        <position position="36"/>
    </location>
    <ligand>
        <name>AMP</name>
        <dbReference type="ChEBI" id="CHEBI:456215"/>
    </ligand>
</feature>
<feature type="binding site" evidence="1">
    <location>
        <begin position="57"/>
        <end position="59"/>
    </location>
    <ligand>
        <name>AMP</name>
        <dbReference type="ChEBI" id="CHEBI:456215"/>
    </ligand>
</feature>
<feature type="binding site" evidence="1">
    <location>
        <begin position="85"/>
        <end position="88"/>
    </location>
    <ligand>
        <name>AMP</name>
        <dbReference type="ChEBI" id="CHEBI:456215"/>
    </ligand>
</feature>
<feature type="binding site" evidence="1">
    <location>
        <position position="92"/>
    </location>
    <ligand>
        <name>AMP</name>
        <dbReference type="ChEBI" id="CHEBI:456215"/>
    </ligand>
</feature>
<feature type="binding site" evidence="1">
    <location>
        <position position="123"/>
    </location>
    <ligand>
        <name>ATP</name>
        <dbReference type="ChEBI" id="CHEBI:30616"/>
    </ligand>
</feature>
<feature type="binding site" evidence="1">
    <location>
        <begin position="132"/>
        <end position="133"/>
    </location>
    <ligand>
        <name>ATP</name>
        <dbReference type="ChEBI" id="CHEBI:30616"/>
    </ligand>
</feature>
<feature type="binding site" evidence="1">
    <location>
        <position position="156"/>
    </location>
    <ligand>
        <name>AMP</name>
        <dbReference type="ChEBI" id="CHEBI:456215"/>
    </ligand>
</feature>
<feature type="binding site" evidence="1">
    <location>
        <position position="167"/>
    </location>
    <ligand>
        <name>AMP</name>
        <dbReference type="ChEBI" id="CHEBI:456215"/>
    </ligand>
</feature>
<feature type="binding site" evidence="1">
    <location>
        <position position="200"/>
    </location>
    <ligand>
        <name>ATP</name>
        <dbReference type="ChEBI" id="CHEBI:30616"/>
    </ligand>
</feature>
<accession>C4K7W8</accession>
<organism>
    <name type="scientific">Hamiltonella defensa subsp. Acyrthosiphon pisum (strain 5AT)</name>
    <dbReference type="NCBI Taxonomy" id="572265"/>
    <lineage>
        <taxon>Bacteria</taxon>
        <taxon>Pseudomonadati</taxon>
        <taxon>Pseudomonadota</taxon>
        <taxon>Gammaproteobacteria</taxon>
        <taxon>Enterobacterales</taxon>
        <taxon>Enterobacteriaceae</taxon>
        <taxon>aphid secondary symbionts</taxon>
        <taxon>Candidatus Hamiltonella</taxon>
    </lineage>
</organism>
<dbReference type="EC" id="2.7.4.3" evidence="1"/>
<dbReference type="EMBL" id="CP001277">
    <property type="protein sequence ID" value="ACQ68661.1"/>
    <property type="molecule type" value="Genomic_DNA"/>
</dbReference>
<dbReference type="RefSeq" id="WP_015874406.1">
    <property type="nucleotide sequence ID" value="NC_012751.1"/>
</dbReference>
<dbReference type="SMR" id="C4K7W8"/>
<dbReference type="STRING" id="572265.HDEF_2095"/>
<dbReference type="GeneID" id="66261632"/>
<dbReference type="KEGG" id="hde:HDEF_2095"/>
<dbReference type="eggNOG" id="COG0563">
    <property type="taxonomic scope" value="Bacteria"/>
</dbReference>
<dbReference type="HOGENOM" id="CLU_032354_1_2_6"/>
<dbReference type="UniPathway" id="UPA00588">
    <property type="reaction ID" value="UER00649"/>
</dbReference>
<dbReference type="Proteomes" id="UP000002334">
    <property type="component" value="Chromosome"/>
</dbReference>
<dbReference type="GO" id="GO:0005737">
    <property type="term" value="C:cytoplasm"/>
    <property type="evidence" value="ECO:0007669"/>
    <property type="project" value="UniProtKB-SubCell"/>
</dbReference>
<dbReference type="GO" id="GO:0004017">
    <property type="term" value="F:adenylate kinase activity"/>
    <property type="evidence" value="ECO:0007669"/>
    <property type="project" value="UniProtKB-UniRule"/>
</dbReference>
<dbReference type="GO" id="GO:0005524">
    <property type="term" value="F:ATP binding"/>
    <property type="evidence" value="ECO:0007669"/>
    <property type="project" value="UniProtKB-UniRule"/>
</dbReference>
<dbReference type="GO" id="GO:0044209">
    <property type="term" value="P:AMP salvage"/>
    <property type="evidence" value="ECO:0007669"/>
    <property type="project" value="UniProtKB-UniRule"/>
</dbReference>
<dbReference type="CDD" id="cd01428">
    <property type="entry name" value="ADK"/>
    <property type="match status" value="1"/>
</dbReference>
<dbReference type="FunFam" id="3.40.50.300:FF:000106">
    <property type="entry name" value="Adenylate kinase mitochondrial"/>
    <property type="match status" value="1"/>
</dbReference>
<dbReference type="Gene3D" id="3.40.50.300">
    <property type="entry name" value="P-loop containing nucleotide triphosphate hydrolases"/>
    <property type="match status" value="1"/>
</dbReference>
<dbReference type="HAMAP" id="MF_00235">
    <property type="entry name" value="Adenylate_kinase_Adk"/>
    <property type="match status" value="1"/>
</dbReference>
<dbReference type="InterPro" id="IPR006259">
    <property type="entry name" value="Adenyl_kin_sub"/>
</dbReference>
<dbReference type="InterPro" id="IPR000850">
    <property type="entry name" value="Adenylat/UMP-CMP_kin"/>
</dbReference>
<dbReference type="InterPro" id="IPR033690">
    <property type="entry name" value="Adenylat_kinase_CS"/>
</dbReference>
<dbReference type="InterPro" id="IPR007862">
    <property type="entry name" value="Adenylate_kinase_lid-dom"/>
</dbReference>
<dbReference type="InterPro" id="IPR027417">
    <property type="entry name" value="P-loop_NTPase"/>
</dbReference>
<dbReference type="NCBIfam" id="TIGR01351">
    <property type="entry name" value="adk"/>
    <property type="match status" value="1"/>
</dbReference>
<dbReference type="NCBIfam" id="NF001379">
    <property type="entry name" value="PRK00279.1-1"/>
    <property type="match status" value="1"/>
</dbReference>
<dbReference type="NCBIfam" id="NF001380">
    <property type="entry name" value="PRK00279.1-2"/>
    <property type="match status" value="1"/>
</dbReference>
<dbReference type="NCBIfam" id="NF001381">
    <property type="entry name" value="PRK00279.1-3"/>
    <property type="match status" value="1"/>
</dbReference>
<dbReference type="PANTHER" id="PTHR23359">
    <property type="entry name" value="NUCLEOTIDE KINASE"/>
    <property type="match status" value="1"/>
</dbReference>
<dbReference type="Pfam" id="PF00406">
    <property type="entry name" value="ADK"/>
    <property type="match status" value="1"/>
</dbReference>
<dbReference type="Pfam" id="PF05191">
    <property type="entry name" value="ADK_lid"/>
    <property type="match status" value="1"/>
</dbReference>
<dbReference type="PRINTS" id="PR00094">
    <property type="entry name" value="ADENYLTKNASE"/>
</dbReference>
<dbReference type="SUPFAM" id="SSF52540">
    <property type="entry name" value="P-loop containing nucleoside triphosphate hydrolases"/>
    <property type="match status" value="1"/>
</dbReference>
<dbReference type="PROSITE" id="PS00113">
    <property type="entry name" value="ADENYLATE_KINASE"/>
    <property type="match status" value="1"/>
</dbReference>
<name>KAD_HAMD5</name>
<comment type="function">
    <text evidence="1">Catalyzes the reversible transfer of the terminal phosphate group between ATP and AMP. Plays an important role in cellular energy homeostasis and in adenine nucleotide metabolism.</text>
</comment>
<comment type="catalytic activity">
    <reaction evidence="1">
        <text>AMP + ATP = 2 ADP</text>
        <dbReference type="Rhea" id="RHEA:12973"/>
        <dbReference type="ChEBI" id="CHEBI:30616"/>
        <dbReference type="ChEBI" id="CHEBI:456215"/>
        <dbReference type="ChEBI" id="CHEBI:456216"/>
        <dbReference type="EC" id="2.7.4.3"/>
    </reaction>
</comment>
<comment type="pathway">
    <text evidence="1">Purine metabolism; AMP biosynthesis via salvage pathway; AMP from ADP: step 1/1.</text>
</comment>
<comment type="subunit">
    <text evidence="1">Monomer.</text>
</comment>
<comment type="subcellular location">
    <subcellularLocation>
        <location evidence="1">Cytoplasm</location>
    </subcellularLocation>
</comment>
<comment type="domain">
    <text evidence="1">Consists of three domains, a large central CORE domain and two small peripheral domains, NMPbind and LID, which undergo movements during catalysis. The LID domain closes over the site of phosphoryl transfer upon ATP binding. Assembling and dissambling the active center during each catalytic cycle provides an effective means to prevent ATP hydrolysis.</text>
</comment>
<comment type="similarity">
    <text evidence="1">Belongs to the adenylate kinase family.</text>
</comment>